<dbReference type="EC" id="2.4.2.14" evidence="2"/>
<dbReference type="EMBL" id="CP000029">
    <property type="protein sequence ID" value="AAW54001.1"/>
    <property type="molecule type" value="Genomic_DNA"/>
</dbReference>
<dbReference type="RefSeq" id="WP_002485328.1">
    <property type="nucleotide sequence ID" value="NC_002976.3"/>
</dbReference>
<dbReference type="SMR" id="Q5HQA0"/>
<dbReference type="STRING" id="176279.SERP0655"/>
<dbReference type="MEROPS" id="C44.001"/>
<dbReference type="GeneID" id="50019092"/>
<dbReference type="KEGG" id="ser:SERP0655"/>
<dbReference type="eggNOG" id="COG0034">
    <property type="taxonomic scope" value="Bacteria"/>
</dbReference>
<dbReference type="HOGENOM" id="CLU_022389_3_1_9"/>
<dbReference type="UniPathway" id="UPA00074">
    <property type="reaction ID" value="UER00124"/>
</dbReference>
<dbReference type="Proteomes" id="UP000000531">
    <property type="component" value="Chromosome"/>
</dbReference>
<dbReference type="GO" id="GO:0004044">
    <property type="term" value="F:amidophosphoribosyltransferase activity"/>
    <property type="evidence" value="ECO:0007669"/>
    <property type="project" value="UniProtKB-UniRule"/>
</dbReference>
<dbReference type="GO" id="GO:0000287">
    <property type="term" value="F:magnesium ion binding"/>
    <property type="evidence" value="ECO:0007669"/>
    <property type="project" value="UniProtKB-UniRule"/>
</dbReference>
<dbReference type="GO" id="GO:0006189">
    <property type="term" value="P:'de novo' IMP biosynthetic process"/>
    <property type="evidence" value="ECO:0007669"/>
    <property type="project" value="UniProtKB-UniRule"/>
</dbReference>
<dbReference type="GO" id="GO:0009113">
    <property type="term" value="P:purine nucleobase biosynthetic process"/>
    <property type="evidence" value="ECO:0007669"/>
    <property type="project" value="InterPro"/>
</dbReference>
<dbReference type="CDD" id="cd00715">
    <property type="entry name" value="GPATase_N"/>
    <property type="match status" value="1"/>
</dbReference>
<dbReference type="CDD" id="cd06223">
    <property type="entry name" value="PRTases_typeI"/>
    <property type="match status" value="1"/>
</dbReference>
<dbReference type="Gene3D" id="3.40.50.2020">
    <property type="match status" value="1"/>
</dbReference>
<dbReference type="Gene3D" id="3.60.20.10">
    <property type="entry name" value="Glutamine Phosphoribosylpyrophosphate, subunit 1, domain 1"/>
    <property type="match status" value="1"/>
</dbReference>
<dbReference type="HAMAP" id="MF_01931">
    <property type="entry name" value="PurF"/>
    <property type="match status" value="1"/>
</dbReference>
<dbReference type="InterPro" id="IPR017932">
    <property type="entry name" value="GATase_2_dom"/>
</dbReference>
<dbReference type="InterPro" id="IPR029055">
    <property type="entry name" value="Ntn_hydrolases_N"/>
</dbReference>
<dbReference type="InterPro" id="IPR000836">
    <property type="entry name" value="PRibTrfase_dom"/>
</dbReference>
<dbReference type="InterPro" id="IPR029057">
    <property type="entry name" value="PRTase-like"/>
</dbReference>
<dbReference type="InterPro" id="IPR005854">
    <property type="entry name" value="PurF"/>
</dbReference>
<dbReference type="InterPro" id="IPR035584">
    <property type="entry name" value="PurF_N"/>
</dbReference>
<dbReference type="NCBIfam" id="TIGR01134">
    <property type="entry name" value="purF"/>
    <property type="match status" value="1"/>
</dbReference>
<dbReference type="PANTHER" id="PTHR11907">
    <property type="entry name" value="AMIDOPHOSPHORIBOSYLTRANSFERASE"/>
    <property type="match status" value="1"/>
</dbReference>
<dbReference type="Pfam" id="PF13537">
    <property type="entry name" value="GATase_7"/>
    <property type="match status" value="1"/>
</dbReference>
<dbReference type="Pfam" id="PF00156">
    <property type="entry name" value="Pribosyltran"/>
    <property type="match status" value="1"/>
</dbReference>
<dbReference type="PIRSF" id="PIRSF000485">
    <property type="entry name" value="Amd_phspho_trans"/>
    <property type="match status" value="1"/>
</dbReference>
<dbReference type="SUPFAM" id="SSF56235">
    <property type="entry name" value="N-terminal nucleophile aminohydrolases (Ntn hydrolases)"/>
    <property type="match status" value="1"/>
</dbReference>
<dbReference type="SUPFAM" id="SSF53271">
    <property type="entry name" value="PRTase-like"/>
    <property type="match status" value="1"/>
</dbReference>
<dbReference type="PROSITE" id="PS51278">
    <property type="entry name" value="GATASE_TYPE_2"/>
    <property type="match status" value="1"/>
</dbReference>
<dbReference type="PROSITE" id="PS00103">
    <property type="entry name" value="PUR_PYR_PR_TRANSFER"/>
    <property type="match status" value="1"/>
</dbReference>
<keyword id="KW-0315">Glutamine amidotransferase</keyword>
<keyword id="KW-0328">Glycosyltransferase</keyword>
<keyword id="KW-0460">Magnesium</keyword>
<keyword id="KW-0479">Metal-binding</keyword>
<keyword id="KW-0658">Purine biosynthesis</keyword>
<keyword id="KW-1185">Reference proteome</keyword>
<keyword id="KW-0808">Transferase</keyword>
<reference key="1">
    <citation type="journal article" date="2005" name="J. Bacteriol.">
        <title>Insights on evolution of virulence and resistance from the complete genome analysis of an early methicillin-resistant Staphylococcus aureus strain and a biofilm-producing methicillin-resistant Staphylococcus epidermidis strain.</title>
        <authorList>
            <person name="Gill S.R."/>
            <person name="Fouts D.E."/>
            <person name="Archer G.L."/>
            <person name="Mongodin E.F."/>
            <person name="DeBoy R.T."/>
            <person name="Ravel J."/>
            <person name="Paulsen I.T."/>
            <person name="Kolonay J.F."/>
            <person name="Brinkac L.M."/>
            <person name="Beanan M.J."/>
            <person name="Dodson R.J."/>
            <person name="Daugherty S.C."/>
            <person name="Madupu R."/>
            <person name="Angiuoli S.V."/>
            <person name="Durkin A.S."/>
            <person name="Haft D.H."/>
            <person name="Vamathevan J.J."/>
            <person name="Khouri H."/>
            <person name="Utterback T.R."/>
            <person name="Lee C."/>
            <person name="Dimitrov G."/>
            <person name="Jiang L."/>
            <person name="Qin H."/>
            <person name="Weidman J."/>
            <person name="Tran K."/>
            <person name="Kang K.H."/>
            <person name="Hance I.R."/>
            <person name="Nelson K.E."/>
            <person name="Fraser C.M."/>
        </authorList>
    </citation>
    <scope>NUCLEOTIDE SEQUENCE [LARGE SCALE GENOMIC DNA]</scope>
    <source>
        <strain>ATCC 35984 / DSM 28319 / BCRC 17069 / CCUG 31568 / BM 3577 / RP62A</strain>
    </source>
</reference>
<protein>
    <recommendedName>
        <fullName evidence="2">Amidophosphoribosyltransferase</fullName>
        <shortName evidence="2">ATase</shortName>
        <ecNumber evidence="2">2.4.2.14</ecNumber>
    </recommendedName>
    <alternativeName>
        <fullName evidence="2">Glutamine phosphoribosylpyrophosphate amidotransferase</fullName>
        <shortName evidence="2">GPATase</shortName>
    </alternativeName>
</protein>
<sequence length="494" mass="54431">MSNYSGLNEECGVFGIWNHPEAAQLTYMGLHSLQHRGQEGAGIVVSNHETLKGERGLGLLTEAIKDEHMSNIKGYPHAIGHVRYATSGNKGIENIQPFLYHFYDMSVGICHNGNLINAKSLRQNLEEQGAIFHSSSDTEVIMHLIRRSKAPTFEEALKESLRLIKGGFTFAILTKDALYGVVDPNAIRPLVVGKMENGAYILASETCAIDVLGAEFIQDIHAGEYVVITDEGIEVKTYTRQTTTAISAMEYIYFARPDSTIAGKNVHAVRKASGKRLAQENPAKADMVIGVPNSSLSAASGYAEEIGLPYEMGLVKNQYVARTFIQPTQELREQGVRVKLSAVKDIVDGKDIVLVDDSIVRGTTIKRIVKMLKDSGANRIHVRIASPEFMFPSFYGIDVSTTAELISASKSPEEIKNHIGADSLAYLSVDGLIESIGLDYDAPYHGLCVESFTGDYPAGLYDYEKNYKKHLSERQKSYIANNKHYFDSEGNLHV</sequence>
<proteinExistence type="inferred from homology"/>
<evidence type="ECO:0000250" key="1"/>
<evidence type="ECO:0000255" key="2">
    <source>
        <dbReference type="HAMAP-Rule" id="MF_01931"/>
    </source>
</evidence>
<organism>
    <name type="scientific">Staphylococcus epidermidis (strain ATCC 35984 / DSM 28319 / BCRC 17069 / CCUG 31568 / BM 3577 / RP62A)</name>
    <dbReference type="NCBI Taxonomy" id="176279"/>
    <lineage>
        <taxon>Bacteria</taxon>
        <taxon>Bacillati</taxon>
        <taxon>Bacillota</taxon>
        <taxon>Bacilli</taxon>
        <taxon>Bacillales</taxon>
        <taxon>Staphylococcaceae</taxon>
        <taxon>Staphylococcus</taxon>
    </lineage>
</organism>
<comment type="function">
    <text evidence="2">Catalyzes the formation of phosphoribosylamine from phosphoribosylpyrophosphate (PRPP) and glutamine.</text>
</comment>
<comment type="catalytic activity">
    <reaction evidence="2">
        <text>5-phospho-beta-D-ribosylamine + L-glutamate + diphosphate = 5-phospho-alpha-D-ribose 1-diphosphate + L-glutamine + H2O</text>
        <dbReference type="Rhea" id="RHEA:14905"/>
        <dbReference type="ChEBI" id="CHEBI:15377"/>
        <dbReference type="ChEBI" id="CHEBI:29985"/>
        <dbReference type="ChEBI" id="CHEBI:33019"/>
        <dbReference type="ChEBI" id="CHEBI:58017"/>
        <dbReference type="ChEBI" id="CHEBI:58359"/>
        <dbReference type="ChEBI" id="CHEBI:58681"/>
        <dbReference type="EC" id="2.4.2.14"/>
    </reaction>
</comment>
<comment type="cofactor">
    <cofactor evidence="2">
        <name>Mg(2+)</name>
        <dbReference type="ChEBI" id="CHEBI:18420"/>
    </cofactor>
    <text evidence="2">Binds 1 Mg(2+) ion per subunit.</text>
</comment>
<comment type="pathway">
    <text evidence="2">Purine metabolism; IMP biosynthesis via de novo pathway; N(1)-(5-phospho-D-ribosyl)glycinamide from 5-phospho-alpha-D-ribose 1-diphosphate: step 1/2.</text>
</comment>
<comment type="similarity">
    <text evidence="2">In the C-terminal section; belongs to the purine/pyrimidine phosphoribosyltransferase family.</text>
</comment>
<feature type="propeptide" id="PRO_0000045304" evidence="1">
    <location>
        <begin position="1"/>
        <end position="10"/>
    </location>
</feature>
<feature type="chain" id="PRO_0000045305" description="Amidophosphoribosyltransferase">
    <location>
        <begin position="11"/>
        <end position="494"/>
    </location>
</feature>
<feature type="domain" description="Glutamine amidotransferase type-2" evidence="2">
    <location>
        <begin position="11"/>
        <end position="231"/>
    </location>
</feature>
<feature type="active site" description="Nucleophile" evidence="2">
    <location>
        <position position="11"/>
    </location>
</feature>
<feature type="binding site" evidence="2">
    <location>
        <position position="294"/>
    </location>
    <ligand>
        <name>Mg(2+)</name>
        <dbReference type="ChEBI" id="CHEBI:18420"/>
    </ligand>
</feature>
<feature type="binding site" evidence="2">
    <location>
        <position position="356"/>
    </location>
    <ligand>
        <name>Mg(2+)</name>
        <dbReference type="ChEBI" id="CHEBI:18420"/>
    </ligand>
</feature>
<feature type="binding site" evidence="2">
    <location>
        <position position="357"/>
    </location>
    <ligand>
        <name>Mg(2+)</name>
        <dbReference type="ChEBI" id="CHEBI:18420"/>
    </ligand>
</feature>
<accession>Q5HQA0</accession>
<gene>
    <name evidence="2" type="primary">purF</name>
    <name type="ordered locus">SERP0655</name>
</gene>
<name>PUR1_STAEQ</name>